<accession>Q9A4I3</accession>
<feature type="chain" id="PRO_0000176917" description="Transcription elongation factor GreA">
    <location>
        <begin position="1"/>
        <end position="157"/>
    </location>
</feature>
<protein>
    <recommendedName>
        <fullName evidence="1">Transcription elongation factor GreA</fullName>
    </recommendedName>
    <alternativeName>
        <fullName evidence="1">Transcript cleavage factor GreA</fullName>
    </alternativeName>
</protein>
<sequence length="157" mass="17232">MEKVPMTVAGYQTLDEELKRLKTVERPAVIAAIAEARSHGDLSENAEYHAAKERQGWIEGQIAEIEDKIARAQVIDVTKLSGKQVKFGATVSVVDEDTEEEARYQIVGDHEADVKSGRISLSSPLSRAMIGKEVGEVVEVNTPGGVKAYEILKVEWL</sequence>
<name>GREA_CAUVC</name>
<proteinExistence type="inferred from homology"/>
<evidence type="ECO:0000255" key="1">
    <source>
        <dbReference type="HAMAP-Rule" id="MF_00105"/>
    </source>
</evidence>
<reference key="1">
    <citation type="journal article" date="2001" name="Proc. Natl. Acad. Sci. U.S.A.">
        <title>Complete genome sequence of Caulobacter crescentus.</title>
        <authorList>
            <person name="Nierman W.C."/>
            <person name="Feldblyum T.V."/>
            <person name="Laub M.T."/>
            <person name="Paulsen I.T."/>
            <person name="Nelson K.E."/>
            <person name="Eisen J.A."/>
            <person name="Heidelberg J.F."/>
            <person name="Alley M.R.K."/>
            <person name="Ohta N."/>
            <person name="Maddock J.R."/>
            <person name="Potocka I."/>
            <person name="Nelson W.C."/>
            <person name="Newton A."/>
            <person name="Stephens C."/>
            <person name="Phadke N.D."/>
            <person name="Ely B."/>
            <person name="DeBoy R.T."/>
            <person name="Dodson R.J."/>
            <person name="Durkin A.S."/>
            <person name="Gwinn M.L."/>
            <person name="Haft D.H."/>
            <person name="Kolonay J.F."/>
            <person name="Smit J."/>
            <person name="Craven M.B."/>
            <person name="Khouri H.M."/>
            <person name="Shetty J."/>
            <person name="Berry K.J."/>
            <person name="Utterback T.R."/>
            <person name="Tran K."/>
            <person name="Wolf A.M."/>
            <person name="Vamathevan J.J."/>
            <person name="Ermolaeva M.D."/>
            <person name="White O."/>
            <person name="Salzberg S.L."/>
            <person name="Venter J.C."/>
            <person name="Shapiro L."/>
            <person name="Fraser C.M."/>
        </authorList>
    </citation>
    <scope>NUCLEOTIDE SEQUENCE [LARGE SCALE GENOMIC DNA]</scope>
    <source>
        <strain>ATCC 19089 / CIP 103742 / CB 15</strain>
    </source>
</reference>
<gene>
    <name evidence="1" type="primary">greA</name>
    <name type="ordered locus">CC_2848</name>
</gene>
<organism>
    <name type="scientific">Caulobacter vibrioides (strain ATCC 19089 / CIP 103742 / CB 15)</name>
    <name type="common">Caulobacter crescentus</name>
    <dbReference type="NCBI Taxonomy" id="190650"/>
    <lineage>
        <taxon>Bacteria</taxon>
        <taxon>Pseudomonadati</taxon>
        <taxon>Pseudomonadota</taxon>
        <taxon>Alphaproteobacteria</taxon>
        <taxon>Caulobacterales</taxon>
        <taxon>Caulobacteraceae</taxon>
        <taxon>Caulobacter</taxon>
    </lineage>
</organism>
<dbReference type="EMBL" id="AE005673">
    <property type="protein sequence ID" value="AAK24812.1"/>
    <property type="molecule type" value="Genomic_DNA"/>
</dbReference>
<dbReference type="PIR" id="H87601">
    <property type="entry name" value="H87601"/>
</dbReference>
<dbReference type="RefSeq" id="NP_421644.1">
    <property type="nucleotide sequence ID" value="NC_002696.2"/>
</dbReference>
<dbReference type="RefSeq" id="WP_010920688.1">
    <property type="nucleotide sequence ID" value="NC_002696.2"/>
</dbReference>
<dbReference type="SMR" id="Q9A4I3"/>
<dbReference type="STRING" id="190650.CC_2848"/>
<dbReference type="EnsemblBacteria" id="AAK24812">
    <property type="protein sequence ID" value="AAK24812"/>
    <property type="gene ID" value="CC_2848"/>
</dbReference>
<dbReference type="KEGG" id="ccr:CC_2848"/>
<dbReference type="PATRIC" id="fig|190650.5.peg.2850"/>
<dbReference type="eggNOG" id="COG0782">
    <property type="taxonomic scope" value="Bacteria"/>
</dbReference>
<dbReference type="HOGENOM" id="CLU_101379_2_0_5"/>
<dbReference type="BioCyc" id="CAULO:CC2848-MONOMER"/>
<dbReference type="Proteomes" id="UP000001816">
    <property type="component" value="Chromosome"/>
</dbReference>
<dbReference type="GO" id="GO:0003677">
    <property type="term" value="F:DNA binding"/>
    <property type="evidence" value="ECO:0007669"/>
    <property type="project" value="UniProtKB-UniRule"/>
</dbReference>
<dbReference type="GO" id="GO:0070063">
    <property type="term" value="F:RNA polymerase binding"/>
    <property type="evidence" value="ECO:0007669"/>
    <property type="project" value="InterPro"/>
</dbReference>
<dbReference type="GO" id="GO:0006354">
    <property type="term" value="P:DNA-templated transcription elongation"/>
    <property type="evidence" value="ECO:0007669"/>
    <property type="project" value="TreeGrafter"/>
</dbReference>
<dbReference type="GO" id="GO:0032784">
    <property type="term" value="P:regulation of DNA-templated transcription elongation"/>
    <property type="evidence" value="ECO:0007669"/>
    <property type="project" value="UniProtKB-UniRule"/>
</dbReference>
<dbReference type="FunFam" id="1.10.287.180:FF:000001">
    <property type="entry name" value="Transcription elongation factor GreA"/>
    <property type="match status" value="1"/>
</dbReference>
<dbReference type="FunFam" id="3.10.50.30:FF:000001">
    <property type="entry name" value="Transcription elongation factor GreA"/>
    <property type="match status" value="1"/>
</dbReference>
<dbReference type="Gene3D" id="3.10.50.30">
    <property type="entry name" value="Transcription elongation factor, GreA/GreB, C-terminal domain"/>
    <property type="match status" value="1"/>
</dbReference>
<dbReference type="Gene3D" id="1.10.287.180">
    <property type="entry name" value="Transcription elongation factor, GreA/GreB, N-terminal domain"/>
    <property type="match status" value="1"/>
</dbReference>
<dbReference type="HAMAP" id="MF_00105">
    <property type="entry name" value="GreA_GreB"/>
    <property type="match status" value="1"/>
</dbReference>
<dbReference type="InterPro" id="IPR036953">
    <property type="entry name" value="GreA/GreB_C_sf"/>
</dbReference>
<dbReference type="InterPro" id="IPR018151">
    <property type="entry name" value="TF_GreA/GreB_CS"/>
</dbReference>
<dbReference type="InterPro" id="IPR006359">
    <property type="entry name" value="Tscrpt_elong_fac_GreA"/>
</dbReference>
<dbReference type="InterPro" id="IPR028624">
    <property type="entry name" value="Tscrpt_elong_fac_GreA/B"/>
</dbReference>
<dbReference type="InterPro" id="IPR001437">
    <property type="entry name" value="Tscrpt_elong_fac_GreA/B_C"/>
</dbReference>
<dbReference type="InterPro" id="IPR023459">
    <property type="entry name" value="Tscrpt_elong_fac_GreA/B_fam"/>
</dbReference>
<dbReference type="InterPro" id="IPR022691">
    <property type="entry name" value="Tscrpt_elong_fac_GreA/B_N"/>
</dbReference>
<dbReference type="InterPro" id="IPR036805">
    <property type="entry name" value="Tscrpt_elong_fac_GreA/B_N_sf"/>
</dbReference>
<dbReference type="NCBIfam" id="TIGR01462">
    <property type="entry name" value="greA"/>
    <property type="match status" value="1"/>
</dbReference>
<dbReference type="NCBIfam" id="NF001261">
    <property type="entry name" value="PRK00226.1-2"/>
    <property type="match status" value="1"/>
</dbReference>
<dbReference type="NCBIfam" id="NF001263">
    <property type="entry name" value="PRK00226.1-4"/>
    <property type="match status" value="1"/>
</dbReference>
<dbReference type="NCBIfam" id="NF001264">
    <property type="entry name" value="PRK00226.1-5"/>
    <property type="match status" value="1"/>
</dbReference>
<dbReference type="PANTHER" id="PTHR30437">
    <property type="entry name" value="TRANSCRIPTION ELONGATION FACTOR GREA"/>
    <property type="match status" value="1"/>
</dbReference>
<dbReference type="PANTHER" id="PTHR30437:SF4">
    <property type="entry name" value="TRANSCRIPTION ELONGATION FACTOR GREA"/>
    <property type="match status" value="1"/>
</dbReference>
<dbReference type="Pfam" id="PF01272">
    <property type="entry name" value="GreA_GreB"/>
    <property type="match status" value="1"/>
</dbReference>
<dbReference type="Pfam" id="PF03449">
    <property type="entry name" value="GreA_GreB_N"/>
    <property type="match status" value="1"/>
</dbReference>
<dbReference type="PIRSF" id="PIRSF006092">
    <property type="entry name" value="GreA_GreB"/>
    <property type="match status" value="1"/>
</dbReference>
<dbReference type="SUPFAM" id="SSF54534">
    <property type="entry name" value="FKBP-like"/>
    <property type="match status" value="1"/>
</dbReference>
<dbReference type="SUPFAM" id="SSF46557">
    <property type="entry name" value="GreA transcript cleavage protein, N-terminal domain"/>
    <property type="match status" value="1"/>
</dbReference>
<dbReference type="PROSITE" id="PS00829">
    <property type="entry name" value="GREAB_1"/>
    <property type="match status" value="1"/>
</dbReference>
<comment type="function">
    <text evidence="1">Necessary for efficient RNA polymerase transcription elongation past template-encoded arresting sites. The arresting sites in DNA have the property of trapping a certain fraction of elongating RNA polymerases that pass through, resulting in locked ternary complexes. Cleavage of the nascent transcript by cleavage factors such as GreA or GreB allows the resumption of elongation from the new 3'terminus. GreA releases sequences of 2 to 3 nucleotides.</text>
</comment>
<comment type="similarity">
    <text evidence="1">Belongs to the GreA/GreB family.</text>
</comment>
<keyword id="KW-0238">DNA-binding</keyword>
<keyword id="KW-1185">Reference proteome</keyword>
<keyword id="KW-0804">Transcription</keyword>
<keyword id="KW-0805">Transcription regulation</keyword>